<organism>
    <name type="scientific">Saccharomyces cerevisiae (strain ATCC 204508 / S288c)</name>
    <name type="common">Baker's yeast</name>
    <dbReference type="NCBI Taxonomy" id="559292"/>
    <lineage>
        <taxon>Eukaryota</taxon>
        <taxon>Fungi</taxon>
        <taxon>Dikarya</taxon>
        <taxon>Ascomycota</taxon>
        <taxon>Saccharomycotina</taxon>
        <taxon>Saccharomycetes</taxon>
        <taxon>Saccharomycetales</taxon>
        <taxon>Saccharomycetaceae</taxon>
        <taxon>Saccharomyces</taxon>
    </lineage>
</organism>
<gene>
    <name type="primary">APM4</name>
    <name type="synonym">AMP1</name>
    <name type="ordered locus">YOL062C</name>
    <name type="ORF">O1210</name>
</gene>
<dbReference type="EMBL" id="X91067">
    <property type="protein sequence ID" value="CAA62522.1"/>
    <property type="molecule type" value="Genomic_DNA"/>
</dbReference>
<dbReference type="EMBL" id="Z74804">
    <property type="protein sequence ID" value="CAA99071.1"/>
    <property type="molecule type" value="Genomic_DNA"/>
</dbReference>
<dbReference type="EMBL" id="BK006948">
    <property type="protein sequence ID" value="DAA10721.1"/>
    <property type="molecule type" value="Genomic_DNA"/>
</dbReference>
<dbReference type="PIR" id="S61715">
    <property type="entry name" value="S61715"/>
</dbReference>
<dbReference type="RefSeq" id="NP_014579.1">
    <property type="nucleotide sequence ID" value="NM_001183317.1"/>
</dbReference>
<dbReference type="SMR" id="Q99186"/>
<dbReference type="BioGRID" id="34339">
    <property type="interactions" value="57"/>
</dbReference>
<dbReference type="ComplexPortal" id="CPX-534">
    <property type="entry name" value="Adapter complex AP-2"/>
</dbReference>
<dbReference type="DIP" id="DIP-5448N"/>
<dbReference type="FunCoup" id="Q99186">
    <property type="interactions" value="216"/>
</dbReference>
<dbReference type="IntAct" id="Q99186">
    <property type="interactions" value="34"/>
</dbReference>
<dbReference type="MINT" id="Q99186"/>
<dbReference type="STRING" id="4932.YOL062C"/>
<dbReference type="iPTMnet" id="Q99186"/>
<dbReference type="PaxDb" id="4932-YOL062C"/>
<dbReference type="PeptideAtlas" id="Q99186"/>
<dbReference type="EnsemblFungi" id="YOL062C_mRNA">
    <property type="protein sequence ID" value="YOL062C"/>
    <property type="gene ID" value="YOL062C"/>
</dbReference>
<dbReference type="GeneID" id="854092"/>
<dbReference type="KEGG" id="sce:YOL062C"/>
<dbReference type="AGR" id="SGD:S000005423"/>
<dbReference type="SGD" id="S000005423">
    <property type="gene designation" value="APM4"/>
</dbReference>
<dbReference type="VEuPathDB" id="FungiDB:YOL062C"/>
<dbReference type="eggNOG" id="KOG0938">
    <property type="taxonomic scope" value="Eukaryota"/>
</dbReference>
<dbReference type="GeneTree" id="ENSGT00940000159223"/>
<dbReference type="HOGENOM" id="CLU_026996_5_2_1"/>
<dbReference type="InParanoid" id="Q99186"/>
<dbReference type="OMA" id="VWKIPRI"/>
<dbReference type="OrthoDB" id="10259133at2759"/>
<dbReference type="BioCyc" id="YEAST:G3O-33470-MONOMER"/>
<dbReference type="Reactome" id="R-SCE-437239">
    <property type="pathway name" value="Recycling pathway of L1"/>
</dbReference>
<dbReference type="Reactome" id="R-SCE-8856825">
    <property type="pathway name" value="Cargo recognition for clathrin-mediated endocytosis"/>
</dbReference>
<dbReference type="Reactome" id="R-SCE-8856828">
    <property type="pathway name" value="Clathrin-mediated endocytosis"/>
</dbReference>
<dbReference type="Reactome" id="R-SCE-8866427">
    <property type="pathway name" value="VLDLR internalisation and degradation"/>
</dbReference>
<dbReference type="Reactome" id="R-SCE-8964038">
    <property type="pathway name" value="LDL clearance"/>
</dbReference>
<dbReference type="BioGRID-ORCS" id="854092">
    <property type="hits" value="0 hits in 10 CRISPR screens"/>
</dbReference>
<dbReference type="PRO" id="PR:Q99186"/>
<dbReference type="Proteomes" id="UP000002311">
    <property type="component" value="Chromosome XV"/>
</dbReference>
<dbReference type="RNAct" id="Q99186">
    <property type="molecule type" value="protein"/>
</dbReference>
<dbReference type="GO" id="GO:0030122">
    <property type="term" value="C:AP-2 adaptor complex"/>
    <property type="evidence" value="ECO:0000353"/>
    <property type="project" value="SGD"/>
</dbReference>
<dbReference type="GO" id="GO:0031410">
    <property type="term" value="C:cytoplasmic vesicle"/>
    <property type="evidence" value="ECO:0000318"/>
    <property type="project" value="GO_Central"/>
</dbReference>
<dbReference type="GO" id="GO:0005829">
    <property type="term" value="C:cytosol"/>
    <property type="evidence" value="ECO:0007005"/>
    <property type="project" value="SGD"/>
</dbReference>
<dbReference type="GO" id="GO:0035615">
    <property type="term" value="F:clathrin adaptor activity"/>
    <property type="evidence" value="ECO:0000318"/>
    <property type="project" value="GO_Central"/>
</dbReference>
<dbReference type="GO" id="GO:0072583">
    <property type="term" value="P:clathrin-dependent endocytosis"/>
    <property type="evidence" value="ECO:0000318"/>
    <property type="project" value="GO_Central"/>
</dbReference>
<dbReference type="GO" id="GO:0006886">
    <property type="term" value="P:intracellular protein transport"/>
    <property type="evidence" value="ECO:0000303"/>
    <property type="project" value="ComplexPortal"/>
</dbReference>
<dbReference type="CDD" id="cd09251">
    <property type="entry name" value="AP-2_Mu2_Cterm"/>
    <property type="match status" value="1"/>
</dbReference>
<dbReference type="CDD" id="cd14836">
    <property type="entry name" value="AP2_Mu_N"/>
    <property type="match status" value="1"/>
</dbReference>
<dbReference type="FunFam" id="3.30.450.60:FF:000029">
    <property type="entry name" value="AP-2 complex subunit mu"/>
    <property type="match status" value="1"/>
</dbReference>
<dbReference type="Gene3D" id="3.30.450.60">
    <property type="match status" value="1"/>
</dbReference>
<dbReference type="Gene3D" id="2.60.40.1170">
    <property type="entry name" value="Mu homology domain, subdomain B"/>
    <property type="match status" value="2"/>
</dbReference>
<dbReference type="InterPro" id="IPR050431">
    <property type="entry name" value="Adaptor_comp_med_subunit"/>
</dbReference>
<dbReference type="InterPro" id="IPR036168">
    <property type="entry name" value="AP2_Mu_C_sf"/>
</dbReference>
<dbReference type="InterPro" id="IPR043532">
    <property type="entry name" value="AP2_Mu_N"/>
</dbReference>
<dbReference type="InterPro" id="IPR001392">
    <property type="entry name" value="Clathrin_mu"/>
</dbReference>
<dbReference type="InterPro" id="IPR011012">
    <property type="entry name" value="Longin-like_dom_sf"/>
</dbReference>
<dbReference type="InterPro" id="IPR028565">
    <property type="entry name" value="MHD"/>
</dbReference>
<dbReference type="InterPro" id="IPR043512">
    <property type="entry name" value="Mu2_C"/>
</dbReference>
<dbReference type="PANTHER" id="PTHR10529">
    <property type="entry name" value="AP COMPLEX SUBUNIT MU"/>
    <property type="match status" value="1"/>
</dbReference>
<dbReference type="Pfam" id="PF00928">
    <property type="entry name" value="Adap_comp_sub"/>
    <property type="match status" value="1"/>
</dbReference>
<dbReference type="PIRSF" id="PIRSF005992">
    <property type="entry name" value="Clathrin_mu"/>
    <property type="match status" value="1"/>
</dbReference>
<dbReference type="SUPFAM" id="SSF49447">
    <property type="entry name" value="Second domain of Mu2 adaptin subunit (ap50) of ap2 adaptor"/>
    <property type="match status" value="1"/>
</dbReference>
<dbReference type="SUPFAM" id="SSF64356">
    <property type="entry name" value="SNARE-like"/>
    <property type="match status" value="1"/>
</dbReference>
<dbReference type="PROSITE" id="PS51072">
    <property type="entry name" value="MHD"/>
    <property type="match status" value="1"/>
</dbReference>
<sequence>MISGVLVYSSRGELVLNKFFKNSLKRSISDIFRVQVINNLDVRSPVLTLGSTTFHHIRSRHGDNLWLVTITRSNANSAAIWEFLYKLDAVMNAYRLDREEALKEEFMIVHEMLDIMLGGNGIPIDTELNSVIAQMSVKPVRNMGGLLDSPDGNDVLSSSSSPTSSAGELHFPKFLTKRSSSFLGQGDSTSDFYDNNKITWRPKGIIHKKDEVFLYVNERINILVSRDGSILKSYVDGTIDITTHLSGTPICRFGLNDSLGMQSEDEKKWLAQQQRHSGSDFGNKNFIPKAAAGSVLLEDCKFHECVSLDKFNRNHIIEFVPPDGSMELMKYHVRDNINLPFKVTPIVTHSTRDNEIDYRITLKSLFPGKLSAKDVVLHIPVPPSTVDCKISVSNGHCKFVPEENAMIWRFNKYNGLTENTLSAVTVSTSDTTQLNLQQWTRPPISLEFEVMMFSNSGLVVRYFTISGKDSKHRAVKWIKYISKAGSYEVRY</sequence>
<evidence type="ECO:0000255" key="1">
    <source>
        <dbReference type="PROSITE-ProRule" id="PRU00404"/>
    </source>
</evidence>
<evidence type="ECO:0000269" key="2">
    <source>
    </source>
</evidence>
<evidence type="ECO:0000269" key="3">
    <source>
    </source>
</evidence>
<evidence type="ECO:0000305" key="4"/>
<evidence type="ECO:0007744" key="5">
    <source>
    </source>
</evidence>
<keyword id="KW-0168">Coated pit</keyword>
<keyword id="KW-0968">Cytoplasmic vesicle</keyword>
<keyword id="KW-0254">Endocytosis</keyword>
<keyword id="KW-0472">Membrane</keyword>
<keyword id="KW-0597">Phosphoprotein</keyword>
<keyword id="KW-0653">Protein transport</keyword>
<keyword id="KW-1185">Reference proteome</keyword>
<keyword id="KW-0813">Transport</keyword>
<comment type="function">
    <text evidence="2">Component of the adaptor complexes which link clathrin to receptors in coated vesicles. Clathrin-associated protein complexes are believed to interact with the cytoplasmic tails of membrane proteins, leading to their selection and concentration.</text>
</comment>
<comment type="subunit">
    <text evidence="2">Adaptor protein complex 2 (AP-2) is a heterotetramer composed of two large adaptins (alpha-type subunit APL3 and beta-type subunit APL1), a medium chain (mu-type subunit APM4) and a small adaptin (sigma-type subunit APS2).</text>
</comment>
<comment type="subcellular location">
    <subcellularLocation>
        <location>Membrane</location>
        <location>Clathrin-coated pit</location>
    </subcellularLocation>
    <subcellularLocation>
        <location>Cytoplasmic vesicle</location>
        <location>Clathrin-coated vesicle membrane</location>
    </subcellularLocation>
</comment>
<comment type="miscellaneous">
    <text evidence="3">Present with 3410 molecules/cell in log phase SD medium.</text>
</comment>
<comment type="similarity">
    <text evidence="4">Belongs to the adaptor complexes medium subunit family.</text>
</comment>
<reference key="1">
    <citation type="journal article" date="1996" name="Yeast">
        <title>Analysis of a 26 kb region on the left arm of yeast chromosome XV.</title>
        <authorList>
            <person name="Mannhaupt G."/>
            <person name="Vetter I."/>
            <person name="Schwarzlose C."/>
            <person name="Mitzel S."/>
            <person name="Feldmann H."/>
        </authorList>
    </citation>
    <scope>NUCLEOTIDE SEQUENCE [GENOMIC DNA]</scope>
    <source>
        <strain>ATCC 90843 / S288c / FY73</strain>
    </source>
</reference>
<reference key="2">
    <citation type="journal article" date="1997" name="Nature">
        <title>The nucleotide sequence of Saccharomyces cerevisiae chromosome XV.</title>
        <authorList>
            <person name="Dujon B."/>
            <person name="Albermann K."/>
            <person name="Aldea M."/>
            <person name="Alexandraki D."/>
            <person name="Ansorge W."/>
            <person name="Arino J."/>
            <person name="Benes V."/>
            <person name="Bohn C."/>
            <person name="Bolotin-Fukuhara M."/>
            <person name="Bordonne R."/>
            <person name="Boyer J."/>
            <person name="Camasses A."/>
            <person name="Casamayor A."/>
            <person name="Casas C."/>
            <person name="Cheret G."/>
            <person name="Cziepluch C."/>
            <person name="Daignan-Fornier B."/>
            <person name="Dang V.-D."/>
            <person name="de Haan M."/>
            <person name="Delius H."/>
            <person name="Durand P."/>
            <person name="Fairhead C."/>
            <person name="Feldmann H."/>
            <person name="Gaillon L."/>
            <person name="Galisson F."/>
            <person name="Gamo F.-J."/>
            <person name="Gancedo C."/>
            <person name="Goffeau A."/>
            <person name="Goulding S.E."/>
            <person name="Grivell L.A."/>
            <person name="Habbig B."/>
            <person name="Hand N.J."/>
            <person name="Hani J."/>
            <person name="Hattenhorst U."/>
            <person name="Hebling U."/>
            <person name="Hernando Y."/>
            <person name="Herrero E."/>
            <person name="Heumann K."/>
            <person name="Hiesel R."/>
            <person name="Hilger F."/>
            <person name="Hofmann B."/>
            <person name="Hollenberg C.P."/>
            <person name="Hughes B."/>
            <person name="Jauniaux J.-C."/>
            <person name="Kalogeropoulos A."/>
            <person name="Katsoulou C."/>
            <person name="Kordes E."/>
            <person name="Lafuente M.J."/>
            <person name="Landt O."/>
            <person name="Louis E.J."/>
            <person name="Maarse A.C."/>
            <person name="Madania A."/>
            <person name="Mannhaupt G."/>
            <person name="Marck C."/>
            <person name="Martin R.P."/>
            <person name="Mewes H.-W."/>
            <person name="Michaux G."/>
            <person name="Paces V."/>
            <person name="Parle-McDermott A.G."/>
            <person name="Pearson B.M."/>
            <person name="Perrin A."/>
            <person name="Pettersson B."/>
            <person name="Poch O."/>
            <person name="Pohl T.M."/>
            <person name="Poirey R."/>
            <person name="Portetelle D."/>
            <person name="Pujol A."/>
            <person name="Purnelle B."/>
            <person name="Ramezani Rad M."/>
            <person name="Rechmann S."/>
            <person name="Schwager C."/>
            <person name="Schweizer M."/>
            <person name="Sor F."/>
            <person name="Sterky F."/>
            <person name="Tarassov I.A."/>
            <person name="Teodoru C."/>
            <person name="Tettelin H."/>
            <person name="Thierry A."/>
            <person name="Tobiasch E."/>
            <person name="Tzermia M."/>
            <person name="Uhlen M."/>
            <person name="Unseld M."/>
            <person name="Valens M."/>
            <person name="Vandenbol M."/>
            <person name="Vetter I."/>
            <person name="Vlcek C."/>
            <person name="Voet M."/>
            <person name="Volckaert G."/>
            <person name="Voss H."/>
            <person name="Wambutt R."/>
            <person name="Wedler H."/>
            <person name="Wiemann S."/>
            <person name="Winsor B."/>
            <person name="Wolfe K.H."/>
            <person name="Zollner A."/>
            <person name="Zumstein E."/>
            <person name="Kleine K."/>
        </authorList>
    </citation>
    <scope>NUCLEOTIDE SEQUENCE [LARGE SCALE GENOMIC DNA]</scope>
    <source>
        <strain>ATCC 204508 / S288c</strain>
    </source>
</reference>
<reference key="3">
    <citation type="journal article" date="2014" name="G3 (Bethesda)">
        <title>The reference genome sequence of Saccharomyces cerevisiae: Then and now.</title>
        <authorList>
            <person name="Engel S.R."/>
            <person name="Dietrich F.S."/>
            <person name="Fisk D.G."/>
            <person name="Binkley G."/>
            <person name="Balakrishnan R."/>
            <person name="Costanzo M.C."/>
            <person name="Dwight S.S."/>
            <person name="Hitz B.C."/>
            <person name="Karra K."/>
            <person name="Nash R.S."/>
            <person name="Weng S."/>
            <person name="Wong E.D."/>
            <person name="Lloyd P."/>
            <person name="Skrzypek M.S."/>
            <person name="Miyasato S.R."/>
            <person name="Simison M."/>
            <person name="Cherry J.M."/>
        </authorList>
    </citation>
    <scope>GENOME REANNOTATION</scope>
    <source>
        <strain>ATCC 204508 / S288c</strain>
    </source>
</reference>
<reference key="4">
    <citation type="journal article" date="1999" name="Mol. Biol. Cell">
        <title>Adaptor complex-independent clathrin function in yeast.</title>
        <authorList>
            <person name="Yeung B.G."/>
            <person name="Phan H.L."/>
            <person name="Payne G.S."/>
        </authorList>
    </citation>
    <scope>FUNCTION</scope>
    <scope>SUBUNIT</scope>
</reference>
<reference key="5">
    <citation type="journal article" date="2003" name="Nature">
        <title>Global analysis of protein expression in yeast.</title>
        <authorList>
            <person name="Ghaemmaghami S."/>
            <person name="Huh W.-K."/>
            <person name="Bower K."/>
            <person name="Howson R.W."/>
            <person name="Belle A."/>
            <person name="Dephoure N."/>
            <person name="O'Shea E.K."/>
            <person name="Weissman J.S."/>
        </authorList>
    </citation>
    <scope>LEVEL OF PROTEIN EXPRESSION [LARGE SCALE ANALYSIS]</scope>
</reference>
<reference key="6">
    <citation type="journal article" date="2007" name="J. Proteome Res.">
        <title>Large-scale phosphorylation analysis of alpha-factor-arrested Saccharomyces cerevisiae.</title>
        <authorList>
            <person name="Li X."/>
            <person name="Gerber S.A."/>
            <person name="Rudner A.D."/>
            <person name="Beausoleil S.A."/>
            <person name="Haas W."/>
            <person name="Villen J."/>
            <person name="Elias J.E."/>
            <person name="Gygi S.P."/>
        </authorList>
    </citation>
    <scope>IDENTIFICATION BY MASS SPECTROMETRY [LARGE SCALE ANALYSIS]</scope>
    <source>
        <strain>ADR376</strain>
    </source>
</reference>
<reference key="7">
    <citation type="journal article" date="2008" name="Mol. Cell. Proteomics">
        <title>A multidimensional chromatography technology for in-depth phosphoproteome analysis.</title>
        <authorList>
            <person name="Albuquerque C.P."/>
            <person name="Smolka M.B."/>
            <person name="Payne S.H."/>
            <person name="Bafna V."/>
            <person name="Eng J."/>
            <person name="Zhou H."/>
        </authorList>
    </citation>
    <scope>IDENTIFICATION BY MASS SPECTROMETRY [LARGE SCALE ANALYSIS]</scope>
</reference>
<reference key="8">
    <citation type="journal article" date="2009" name="Science">
        <title>Global analysis of Cdk1 substrate phosphorylation sites provides insights into evolution.</title>
        <authorList>
            <person name="Holt L.J."/>
            <person name="Tuch B.B."/>
            <person name="Villen J."/>
            <person name="Johnson A.D."/>
            <person name="Gygi S.P."/>
            <person name="Morgan D.O."/>
        </authorList>
    </citation>
    <scope>PHOSPHORYLATION [LARGE SCALE ANALYSIS] AT SER-179; SER-180 AND SER-181</scope>
    <scope>IDENTIFICATION BY MASS SPECTROMETRY [LARGE SCALE ANALYSIS]</scope>
</reference>
<protein>
    <recommendedName>
        <fullName>AP-2 complex subunit mu</fullName>
    </recommendedName>
    <alternativeName>
        <fullName>Adaptin medium chain APM4</fullName>
    </alternativeName>
    <alternativeName>
        <fullName>Clathrin assembly protein complex 2 mu medium chain</fullName>
    </alternativeName>
    <alternativeName>
        <fullName>Clathrin coat assembly protein AP50</fullName>
    </alternativeName>
    <alternativeName>
        <fullName>Clathrin coat-associated protein AP50</fullName>
    </alternativeName>
    <alternativeName>
        <fullName>Mu2-adaptin</fullName>
    </alternativeName>
    <alternativeName>
        <fullName>Plasma membrane adaptor AP-2 50 kDa protein</fullName>
    </alternativeName>
</protein>
<name>AP2M_YEAST</name>
<proteinExistence type="evidence at protein level"/>
<accession>Q99186</accession>
<accession>D6W205</accession>
<feature type="chain" id="PRO_0000193780" description="AP-2 complex subunit mu">
    <location>
        <begin position="1"/>
        <end position="491"/>
    </location>
</feature>
<feature type="domain" description="MHD" evidence="1">
    <location>
        <begin position="209"/>
        <end position="490"/>
    </location>
</feature>
<feature type="modified residue" description="Phosphoserine" evidence="5">
    <location>
        <position position="179"/>
    </location>
</feature>
<feature type="modified residue" description="Phosphoserine" evidence="5">
    <location>
        <position position="180"/>
    </location>
</feature>
<feature type="modified residue" description="Phosphoserine" evidence="5">
    <location>
        <position position="181"/>
    </location>
</feature>